<feature type="chain" id="PRO_0000274147" description="Cytosol aminopeptidase">
    <location>
        <begin position="1"/>
        <end position="520"/>
    </location>
</feature>
<feature type="active site" evidence="1">
    <location>
        <position position="292"/>
    </location>
</feature>
<feature type="active site" evidence="1">
    <location>
        <position position="366"/>
    </location>
</feature>
<feature type="binding site" evidence="1">
    <location>
        <position position="200"/>
    </location>
    <ligand>
        <name>Zn(2+)</name>
        <dbReference type="ChEBI" id="CHEBI:29105"/>
        <label>3</label>
        <note>structural</note>
    </ligand>
</feature>
<feature type="binding site" evidence="1">
    <location>
        <position position="201"/>
    </location>
    <ligand>
        <name>Zn(2+)</name>
        <dbReference type="ChEBI" id="CHEBI:29105"/>
        <label>3</label>
        <note>structural</note>
    </ligand>
</feature>
<feature type="binding site" evidence="1">
    <location>
        <position position="280"/>
    </location>
    <ligand>
        <name>substrate</name>
    </ligand>
</feature>
<feature type="binding site" evidence="1">
    <location>
        <position position="280"/>
    </location>
    <ligand>
        <name>Zn(2+)</name>
        <dbReference type="ChEBI" id="CHEBI:29105"/>
        <label>2</label>
        <note>catalytic</note>
    </ligand>
</feature>
<feature type="binding site" evidence="1">
    <location>
        <position position="285"/>
    </location>
    <ligand>
        <name>Mg(2+)</name>
        <dbReference type="ChEBI" id="CHEBI:18420"/>
        <note>catalytic</note>
    </ligand>
</feature>
<feature type="binding site" evidence="1">
    <location>
        <position position="285"/>
    </location>
    <ligand>
        <name>substrate</name>
    </ligand>
</feature>
<feature type="binding site" evidence="1">
    <location>
        <position position="285"/>
    </location>
    <ligand>
        <name>Zn(2+)</name>
        <dbReference type="ChEBI" id="CHEBI:29105"/>
        <label>1</label>
        <note>catalytic</note>
    </ligand>
</feature>
<feature type="binding site" evidence="1">
    <location>
        <position position="285"/>
    </location>
    <ligand>
        <name>Zn(2+)</name>
        <dbReference type="ChEBI" id="CHEBI:29105"/>
        <label>2</label>
        <note>catalytic</note>
    </ligand>
</feature>
<feature type="binding site" evidence="1">
    <location>
        <position position="290"/>
    </location>
    <ligand>
        <name>substrate</name>
    </ligand>
</feature>
<feature type="binding site" evidence="1">
    <location>
        <position position="292"/>
    </location>
    <ligand>
        <name>substrate</name>
    </ligand>
</feature>
<feature type="binding site" evidence="1">
    <location>
        <position position="301"/>
    </location>
    <ligand>
        <name>Zn(2+)</name>
        <dbReference type="ChEBI" id="CHEBI:29105"/>
        <label>3</label>
        <note>structural</note>
    </ligand>
</feature>
<feature type="binding site" evidence="1">
    <location>
        <position position="303"/>
    </location>
    <ligand>
        <name>substrate</name>
    </ligand>
</feature>
<feature type="binding site" evidence="1">
    <location>
        <position position="303"/>
    </location>
    <ligand>
        <name>Zn(2+)</name>
        <dbReference type="ChEBI" id="CHEBI:29105"/>
        <label>2</label>
        <note>catalytic</note>
    </ligand>
</feature>
<feature type="binding site" evidence="1">
    <location>
        <position position="362"/>
    </location>
    <ligand>
        <name>Mg(2+)</name>
        <dbReference type="ChEBI" id="CHEBI:18420"/>
        <note>catalytic</note>
    </ligand>
</feature>
<feature type="binding site" evidence="1">
    <location>
        <position position="362"/>
    </location>
    <ligand>
        <name>substrate</name>
    </ligand>
</feature>
<feature type="binding site" evidence="1">
    <location>
        <position position="362"/>
    </location>
    <ligand>
        <name>Zn(2+)</name>
        <dbReference type="ChEBI" id="CHEBI:29105"/>
        <label>1</label>
        <note>catalytic</note>
    </ligand>
</feature>
<feature type="binding site" evidence="1">
    <location>
        <position position="364"/>
    </location>
    <ligand>
        <name>Mg(2+)</name>
        <dbReference type="ChEBI" id="CHEBI:18420"/>
        <note>catalytic</note>
    </ligand>
</feature>
<feature type="binding site" evidence="1">
    <location>
        <position position="364"/>
    </location>
    <ligand>
        <name>Zn(2+)</name>
        <dbReference type="ChEBI" id="CHEBI:29105"/>
        <label>1</label>
        <note>catalytic</note>
    </ligand>
</feature>
<feature type="binding site" evidence="1">
    <location>
        <position position="364"/>
    </location>
    <ligand>
        <name>Zn(2+)</name>
        <dbReference type="ChEBI" id="CHEBI:29105"/>
        <label>2</label>
        <note>catalytic</note>
    </ligand>
</feature>
<evidence type="ECO:0000250" key="1">
    <source>
        <dbReference type="UniProtKB" id="P00727"/>
    </source>
</evidence>
<evidence type="ECO:0000250" key="2">
    <source>
        <dbReference type="UniProtKB" id="P28838"/>
    </source>
</evidence>
<evidence type="ECO:0000250" key="3">
    <source>
        <dbReference type="UniProtKB" id="P28839"/>
    </source>
</evidence>
<evidence type="ECO:0000250" key="4">
    <source>
        <dbReference type="UniProtKB" id="Q68FS4"/>
    </source>
</evidence>
<evidence type="ECO:0000305" key="5"/>
<organism>
    <name type="scientific">Xenopus tropicalis</name>
    <name type="common">Western clawed frog</name>
    <name type="synonym">Silurana tropicalis</name>
    <dbReference type="NCBI Taxonomy" id="8364"/>
    <lineage>
        <taxon>Eukaryota</taxon>
        <taxon>Metazoa</taxon>
        <taxon>Chordata</taxon>
        <taxon>Craniata</taxon>
        <taxon>Vertebrata</taxon>
        <taxon>Euteleostomi</taxon>
        <taxon>Amphibia</taxon>
        <taxon>Batrachia</taxon>
        <taxon>Anura</taxon>
        <taxon>Pipoidea</taxon>
        <taxon>Pipidae</taxon>
        <taxon>Xenopodinae</taxon>
        <taxon>Xenopus</taxon>
        <taxon>Silurana</taxon>
    </lineage>
</organism>
<protein>
    <recommendedName>
        <fullName evidence="5">Cytosol aminopeptidase</fullName>
        <ecNumber evidence="1">3.4.11.1</ecNumber>
    </recommendedName>
    <alternativeName>
        <fullName evidence="1">Cysteinylglycine-S-conjugate dipeptidase</fullName>
        <ecNumber evidence="1">3.4.13.23</ecNumber>
    </alternativeName>
    <alternativeName>
        <fullName evidence="2">Leucine aminopeptidase 3</fullName>
        <shortName>LAP-3</shortName>
    </alternativeName>
    <alternativeName>
        <fullName evidence="1">Leucyl aminopeptidase</fullName>
    </alternativeName>
    <alternativeName>
        <fullName evidence="3">Proline aminopeptidase</fullName>
        <ecNumber evidence="3">3.4.11.5</ecNumber>
    </alternativeName>
    <alternativeName>
        <fullName evidence="2">Prolyl aminopeptidase</fullName>
    </alternativeName>
</protein>
<dbReference type="EC" id="3.4.11.1" evidence="1"/>
<dbReference type="EC" id="3.4.13.23" evidence="1"/>
<dbReference type="EC" id="3.4.11.5" evidence="3"/>
<dbReference type="EMBL" id="BC084523">
    <property type="protein sequence ID" value="AAH84523.1"/>
    <property type="molecule type" value="mRNA"/>
</dbReference>
<dbReference type="RefSeq" id="NP_001011124.1">
    <property type="nucleotide sequence ID" value="NM_001011124.2"/>
</dbReference>
<dbReference type="SMR" id="Q5XGB9"/>
<dbReference type="FunCoup" id="Q5XGB9">
    <property type="interactions" value="898"/>
</dbReference>
<dbReference type="STRING" id="8364.ENSXETP00000008235"/>
<dbReference type="MEROPS" id="M17.001"/>
<dbReference type="PaxDb" id="8364-ENSXETP00000043882"/>
<dbReference type="GeneID" id="496537"/>
<dbReference type="KEGG" id="xtr:496537"/>
<dbReference type="AGR" id="Xenbase:XB-GENE-1006711"/>
<dbReference type="CTD" id="51056"/>
<dbReference type="Xenbase" id="XB-GENE-1006711">
    <property type="gene designation" value="lap3"/>
</dbReference>
<dbReference type="eggNOG" id="KOG2597">
    <property type="taxonomic scope" value="Eukaryota"/>
</dbReference>
<dbReference type="HOGENOM" id="CLU_013734_1_2_1"/>
<dbReference type="InParanoid" id="Q5XGB9"/>
<dbReference type="OMA" id="WPMPLPE"/>
<dbReference type="OrthoDB" id="412814at2759"/>
<dbReference type="PhylomeDB" id="Q5XGB9"/>
<dbReference type="Proteomes" id="UP000008143">
    <property type="component" value="Chromosome 1"/>
</dbReference>
<dbReference type="Bgee" id="ENSXETG00000020343">
    <property type="expression patterns" value="Expressed in heart and 13 other cell types or tissues"/>
</dbReference>
<dbReference type="GO" id="GO:0005737">
    <property type="term" value="C:cytoplasm"/>
    <property type="evidence" value="ECO:0007669"/>
    <property type="project" value="UniProtKB-SubCell"/>
</dbReference>
<dbReference type="GO" id="GO:0004180">
    <property type="term" value="F:carboxypeptidase activity"/>
    <property type="evidence" value="ECO:0007669"/>
    <property type="project" value="RHEA"/>
</dbReference>
<dbReference type="GO" id="GO:0030145">
    <property type="term" value="F:manganese ion binding"/>
    <property type="evidence" value="ECO:0007669"/>
    <property type="project" value="InterPro"/>
</dbReference>
<dbReference type="GO" id="GO:0070006">
    <property type="term" value="F:metalloaminopeptidase activity"/>
    <property type="evidence" value="ECO:0007669"/>
    <property type="project" value="InterPro"/>
</dbReference>
<dbReference type="GO" id="GO:0006508">
    <property type="term" value="P:proteolysis"/>
    <property type="evidence" value="ECO:0007669"/>
    <property type="project" value="UniProtKB-KW"/>
</dbReference>
<dbReference type="CDD" id="cd00433">
    <property type="entry name" value="Peptidase_M17"/>
    <property type="match status" value="1"/>
</dbReference>
<dbReference type="FunFam" id="3.40.630.10:FF:000031">
    <property type="entry name" value="cytosol aminopeptidase"/>
    <property type="match status" value="1"/>
</dbReference>
<dbReference type="Gene3D" id="3.40.220.10">
    <property type="entry name" value="Leucine Aminopeptidase, subunit E, domain 1"/>
    <property type="match status" value="1"/>
</dbReference>
<dbReference type="Gene3D" id="3.40.630.10">
    <property type="entry name" value="Zn peptidases"/>
    <property type="match status" value="1"/>
</dbReference>
<dbReference type="HAMAP" id="MF_00181">
    <property type="entry name" value="Cytosol_peptidase_M17"/>
    <property type="match status" value="1"/>
</dbReference>
<dbReference type="InterPro" id="IPR011356">
    <property type="entry name" value="Leucine_aapep/pepB"/>
</dbReference>
<dbReference type="InterPro" id="IPR043472">
    <property type="entry name" value="Macro_dom-like"/>
</dbReference>
<dbReference type="InterPro" id="IPR000819">
    <property type="entry name" value="Peptidase_M17_C"/>
</dbReference>
<dbReference type="InterPro" id="IPR023042">
    <property type="entry name" value="Peptidase_M17_leu_NH2_pept"/>
</dbReference>
<dbReference type="InterPro" id="IPR008283">
    <property type="entry name" value="Peptidase_M17_N"/>
</dbReference>
<dbReference type="PANTHER" id="PTHR11963:SF23">
    <property type="entry name" value="CYTOSOL AMINOPEPTIDASE"/>
    <property type="match status" value="1"/>
</dbReference>
<dbReference type="PANTHER" id="PTHR11963">
    <property type="entry name" value="LEUCINE AMINOPEPTIDASE-RELATED"/>
    <property type="match status" value="1"/>
</dbReference>
<dbReference type="Pfam" id="PF00883">
    <property type="entry name" value="Peptidase_M17"/>
    <property type="match status" value="1"/>
</dbReference>
<dbReference type="Pfam" id="PF02789">
    <property type="entry name" value="Peptidase_M17_N"/>
    <property type="match status" value="1"/>
</dbReference>
<dbReference type="PRINTS" id="PR00481">
    <property type="entry name" value="LAMNOPPTDASE"/>
</dbReference>
<dbReference type="SUPFAM" id="SSF52949">
    <property type="entry name" value="Macro domain-like"/>
    <property type="match status" value="1"/>
</dbReference>
<dbReference type="SUPFAM" id="SSF53187">
    <property type="entry name" value="Zn-dependent exopeptidases"/>
    <property type="match status" value="1"/>
</dbReference>
<dbReference type="PROSITE" id="PS00631">
    <property type="entry name" value="CYTOSOL_AP"/>
    <property type="match status" value="1"/>
</dbReference>
<sequence>MLPFRTLLKWSVNRNCCRGFAVSQQNYNSVKKGLVLGVYEKEKEEESLTLTNAGDAVDNAVLGKLRDQLARSGPSLKKGKSRIFYGLHEDFPSIVVVGLGKKSAGVNQHELWNEAKENIRAAVSVGCRQMQDMEIVQVEVDPCGDAQAAAEGAVLGLFEYNEMKKKKKKAVTTHLHGSSEITAWEKGVLYAEGQNLARHLMEAPANYITPTKFAETFEQRLANMGSNVKVFTRSKQWIEEQQMGAFLSVAKGSEEPPVFLEIHYSGSSDASQPPLVFVGKGVTFDSGGISLKPSSGMDAMRGDMGGAATVCSAITTAAKLKLPINIISLAPLCENMPNGRANKPGDVVKAKNGKTIQVDNTDAEGRLLLADALCYAHSFNPRAIVNAATLTGAMDVALGSAAAGVFTNSSWLWTHLQEASVVTGDRVWRMPLFEHYSKQVTESALADLNNIGKYSRSGGACTAAAFLKEFVTAPHWAHLDIAGVMSNKDEVPYLRKGMSGRPTRTLIEFAARLSEDKQTI</sequence>
<accession>Q5XGB9</accession>
<name>AMPL_XENTR</name>
<reference key="1">
    <citation type="submission" date="2004-10" db="EMBL/GenBank/DDBJ databases">
        <authorList>
            <consortium name="NIH - Xenopus Gene Collection (XGC) project"/>
        </authorList>
    </citation>
    <scope>NUCLEOTIDE SEQUENCE [LARGE SCALE MRNA]</scope>
    <source>
        <tissue>Embryo</tissue>
    </source>
</reference>
<proteinExistence type="evidence at transcript level"/>
<gene>
    <name type="primary">lap3</name>
</gene>
<keyword id="KW-0031">Aminopeptidase</keyword>
<keyword id="KW-0963">Cytoplasm</keyword>
<keyword id="KW-0378">Hydrolase</keyword>
<keyword id="KW-0460">Magnesium</keyword>
<keyword id="KW-0464">Manganese</keyword>
<keyword id="KW-0479">Metal-binding</keyword>
<keyword id="KW-0645">Protease</keyword>
<keyword id="KW-1185">Reference proteome</keyword>
<keyword id="KW-0862">Zinc</keyword>
<comment type="function">
    <text evidence="1">Cytosolic metallopeptidase that catalyzes the removal of unsubstituted N-terminal hydrophobic amino acids from various peptides. The presence of Zn(2+) ions is essential for the peptidase activity, and the association with other cofactors can modulate the substrate spectificity of the enzyme. For instance, in the presence of Mn(2+), it displays a specific Cys-Gly hydrolyzing activity of Cys-Gly-S-conjugates. Involved in the metabolism of glutathione and in the degradation of glutathione S-conjugates, which may play a role in the control of the cell redox status.</text>
</comment>
<comment type="catalytic activity">
    <reaction evidence="1">
        <text>Release of an N-terminal amino acid, Xaa-|-Yaa-, in which Xaa is preferably Leu, but may be other amino acids including Pro although not Arg or Lys, and Yaa may be Pro. Amino acid amides and methyl esters are also readily hydrolyzed, but rates on arylamides are exceedingly low.</text>
        <dbReference type="EC" id="3.4.11.1"/>
    </reaction>
</comment>
<comment type="catalytic activity">
    <reaction evidence="1">
        <text>an S-substituted L-cysteinylglycine + H2O = an S-substituted L-cysteine + glycine</text>
        <dbReference type="Rhea" id="RHEA:60444"/>
        <dbReference type="ChEBI" id="CHEBI:15377"/>
        <dbReference type="ChEBI" id="CHEBI:57305"/>
        <dbReference type="ChEBI" id="CHEBI:58717"/>
        <dbReference type="ChEBI" id="CHEBI:143103"/>
        <dbReference type="EC" id="3.4.13.23"/>
    </reaction>
    <physiologicalReaction direction="left-to-right" evidence="1">
        <dbReference type="Rhea" id="RHEA:60445"/>
    </physiologicalReaction>
</comment>
<comment type="catalytic activity">
    <reaction evidence="1">
        <text>L-cysteinylglycine + H2O = L-cysteine + glycine</text>
        <dbReference type="Rhea" id="RHEA:28783"/>
        <dbReference type="ChEBI" id="CHEBI:15377"/>
        <dbReference type="ChEBI" id="CHEBI:35235"/>
        <dbReference type="ChEBI" id="CHEBI:57305"/>
        <dbReference type="ChEBI" id="CHEBI:61694"/>
    </reaction>
    <physiologicalReaction direction="left-to-right" evidence="1">
        <dbReference type="Rhea" id="RHEA:28784"/>
    </physiologicalReaction>
</comment>
<comment type="catalytic activity">
    <reaction evidence="4">
        <text>S-benzyl-L-cysteinylglycine + H2O = S-benzyl-L-cysteine + glycine</text>
        <dbReference type="Rhea" id="RHEA:62568"/>
        <dbReference type="ChEBI" id="CHEBI:15377"/>
        <dbReference type="ChEBI" id="CHEBI:57305"/>
        <dbReference type="ChEBI" id="CHEBI:145802"/>
        <dbReference type="ChEBI" id="CHEBI:145803"/>
    </reaction>
    <physiologicalReaction direction="left-to-right" evidence="4">
        <dbReference type="Rhea" id="RHEA:62569"/>
    </physiologicalReaction>
</comment>
<comment type="catalytic activity">
    <reaction evidence="3">
        <text>Release of N-terminal proline from a peptide.</text>
        <dbReference type="EC" id="3.4.11.5"/>
    </reaction>
</comment>
<comment type="cofactor">
    <cofactor evidence="1">
        <name>Zn(2+)</name>
        <dbReference type="ChEBI" id="CHEBI:29105"/>
    </cofactor>
    <cofactor evidence="1">
        <name>Mn(2+)</name>
        <dbReference type="ChEBI" id="CHEBI:29035"/>
    </cofactor>
    <text evidence="1">Binds two metal ions per subunit. Two metal binding sites with different affinities are located in the enzyme active site and can be occupied in vitro by different metals: site 1 is occupied by Zn(2+), Mn(2+), Mg(2+) or Co(2+), while the tight binding site 2 can be occupied by only Zn(2+) or Co(2+). One Zn(2+) ion is tightly bound to site 2 and essential for enzyme activity in vivo, while site 1 can be occupied by different metals to give different enzymatic activities. Mn(2+) is required for Cys-Gly hydrolysis activity. A third metal binding site may serve a structural role, possibly stabilizing part of the interface between the N-terminal and the catalytic domain.</text>
</comment>
<comment type="subunit">
    <text evidence="1">Homohexamer.</text>
</comment>
<comment type="subcellular location">
    <subcellularLocation>
        <location evidence="4">Cytoplasm</location>
    </subcellularLocation>
</comment>
<comment type="similarity">
    <text evidence="5">Belongs to the peptidase M17 family.</text>
</comment>